<name>NTPP_RICFE</name>
<comment type="function">
    <text evidence="1">Nucleoside triphosphate pyrophosphatase. May have a dual role in cell division arrest and in preventing the incorporation of modified nucleotides into cellular nucleic acids.</text>
</comment>
<comment type="catalytic activity">
    <reaction evidence="1">
        <text>a ribonucleoside 5'-triphosphate + H2O = a ribonucleoside 5'-phosphate + diphosphate + H(+)</text>
        <dbReference type="Rhea" id="RHEA:23996"/>
        <dbReference type="ChEBI" id="CHEBI:15377"/>
        <dbReference type="ChEBI" id="CHEBI:15378"/>
        <dbReference type="ChEBI" id="CHEBI:33019"/>
        <dbReference type="ChEBI" id="CHEBI:58043"/>
        <dbReference type="ChEBI" id="CHEBI:61557"/>
        <dbReference type="EC" id="3.6.1.9"/>
    </reaction>
</comment>
<comment type="catalytic activity">
    <reaction evidence="1">
        <text>a 2'-deoxyribonucleoside 5'-triphosphate + H2O = a 2'-deoxyribonucleoside 5'-phosphate + diphosphate + H(+)</text>
        <dbReference type="Rhea" id="RHEA:44644"/>
        <dbReference type="ChEBI" id="CHEBI:15377"/>
        <dbReference type="ChEBI" id="CHEBI:15378"/>
        <dbReference type="ChEBI" id="CHEBI:33019"/>
        <dbReference type="ChEBI" id="CHEBI:61560"/>
        <dbReference type="ChEBI" id="CHEBI:65317"/>
        <dbReference type="EC" id="3.6.1.9"/>
    </reaction>
</comment>
<comment type="cofactor">
    <cofactor evidence="1">
        <name>a divalent metal cation</name>
        <dbReference type="ChEBI" id="CHEBI:60240"/>
    </cofactor>
</comment>
<comment type="subcellular location">
    <subcellularLocation>
        <location evidence="1">Cytoplasm</location>
    </subcellularLocation>
</comment>
<comment type="similarity">
    <text evidence="1">Belongs to the Maf family.</text>
</comment>
<gene>
    <name type="ordered locus">RF_1293</name>
</gene>
<reference key="1">
    <citation type="journal article" date="2005" name="PLoS Biol.">
        <title>The genome sequence of Rickettsia felis identifies the first putative conjugative plasmid in an obligate intracellular parasite.</title>
        <authorList>
            <person name="Ogata H."/>
            <person name="Renesto P."/>
            <person name="Audic S."/>
            <person name="Robert C."/>
            <person name="Blanc G."/>
            <person name="Fournier P.-E."/>
            <person name="Parinello H."/>
            <person name="Claverie J.-M."/>
            <person name="Raoult D."/>
        </authorList>
    </citation>
    <scope>NUCLEOTIDE SEQUENCE [LARGE SCALE GENOMIC DNA]</scope>
    <source>
        <strain>ATCC VR-1525 / URRWXCal2</strain>
    </source>
</reference>
<protein>
    <recommendedName>
        <fullName evidence="1">Nucleoside triphosphate pyrophosphatase</fullName>
        <ecNumber evidence="1">3.6.1.9</ecNumber>
    </recommendedName>
    <alternativeName>
        <fullName evidence="1">Nucleotide pyrophosphatase</fullName>
        <shortName evidence="1">Nucleotide PPase</shortName>
    </alternativeName>
</protein>
<evidence type="ECO:0000255" key="1">
    <source>
        <dbReference type="HAMAP-Rule" id="MF_00528"/>
    </source>
</evidence>
<proteinExistence type="inferred from homology"/>
<organism>
    <name type="scientific">Rickettsia felis (strain ATCC VR-1525 / URRWXCal2)</name>
    <name type="common">Rickettsia azadi</name>
    <dbReference type="NCBI Taxonomy" id="315456"/>
    <lineage>
        <taxon>Bacteria</taxon>
        <taxon>Pseudomonadati</taxon>
        <taxon>Pseudomonadota</taxon>
        <taxon>Alphaproteobacteria</taxon>
        <taxon>Rickettsiales</taxon>
        <taxon>Rickettsiaceae</taxon>
        <taxon>Rickettsieae</taxon>
        <taxon>Rickettsia</taxon>
        <taxon>spotted fever group</taxon>
    </lineage>
</organism>
<keyword id="KW-0963">Cytoplasm</keyword>
<keyword id="KW-0378">Hydrolase</keyword>
<keyword id="KW-0546">Nucleotide metabolism</keyword>
<feature type="chain" id="PRO_0000267411" description="Nucleoside triphosphate pyrophosphatase">
    <location>
        <begin position="1"/>
        <end position="203"/>
    </location>
</feature>
<feature type="active site" description="Proton acceptor" evidence="1">
    <location>
        <position position="77"/>
    </location>
</feature>
<sequence length="203" mass="22530">MKQNKKNLPIILASSSPARIELLNRIKIIPSQIIPADIDETPNLRELPAPLAIRLAYEKAIKVASQIEESAIIIAADTVAAVGRRILPKATTYEEVKNCIKMVSGRRHRVYTGLCIIKKENDQLTVRQKIVQTIVKFKKLSDEEINFYCSLDEGIDKAGGCKISGYAEAFISFISGSYSNVMGLPLFETVNALTSLGFKVYNR</sequence>
<accession>Q4UJZ5</accession>
<dbReference type="EC" id="3.6.1.9" evidence="1"/>
<dbReference type="EMBL" id="CP000053">
    <property type="protein sequence ID" value="AAY62144.1"/>
    <property type="molecule type" value="Genomic_DNA"/>
</dbReference>
<dbReference type="SMR" id="Q4UJZ5"/>
<dbReference type="STRING" id="315456.RF_1293"/>
<dbReference type="KEGG" id="rfe:RF_1293"/>
<dbReference type="eggNOG" id="COG0424">
    <property type="taxonomic scope" value="Bacteria"/>
</dbReference>
<dbReference type="HOGENOM" id="CLU_040416_2_0_5"/>
<dbReference type="OrthoDB" id="9807767at2"/>
<dbReference type="Proteomes" id="UP000008548">
    <property type="component" value="Chromosome"/>
</dbReference>
<dbReference type="GO" id="GO:0005737">
    <property type="term" value="C:cytoplasm"/>
    <property type="evidence" value="ECO:0007669"/>
    <property type="project" value="UniProtKB-SubCell"/>
</dbReference>
<dbReference type="GO" id="GO:0047429">
    <property type="term" value="F:nucleoside triphosphate diphosphatase activity"/>
    <property type="evidence" value="ECO:0007669"/>
    <property type="project" value="UniProtKB-EC"/>
</dbReference>
<dbReference type="GO" id="GO:0009117">
    <property type="term" value="P:nucleotide metabolic process"/>
    <property type="evidence" value="ECO:0007669"/>
    <property type="project" value="UniProtKB-KW"/>
</dbReference>
<dbReference type="CDD" id="cd00555">
    <property type="entry name" value="Maf"/>
    <property type="match status" value="1"/>
</dbReference>
<dbReference type="Gene3D" id="3.90.950.10">
    <property type="match status" value="1"/>
</dbReference>
<dbReference type="HAMAP" id="MF_00528">
    <property type="entry name" value="Maf"/>
    <property type="match status" value="1"/>
</dbReference>
<dbReference type="InterPro" id="IPR029001">
    <property type="entry name" value="ITPase-like_fam"/>
</dbReference>
<dbReference type="InterPro" id="IPR003697">
    <property type="entry name" value="Maf-like"/>
</dbReference>
<dbReference type="NCBIfam" id="TIGR00172">
    <property type="entry name" value="maf"/>
    <property type="match status" value="1"/>
</dbReference>
<dbReference type="PANTHER" id="PTHR43213">
    <property type="entry name" value="BIFUNCTIONAL DTTP/UTP PYROPHOSPHATASE/METHYLTRANSFERASE PROTEIN-RELATED"/>
    <property type="match status" value="1"/>
</dbReference>
<dbReference type="PANTHER" id="PTHR43213:SF5">
    <property type="entry name" value="BIFUNCTIONAL DTTP_UTP PYROPHOSPHATASE_METHYLTRANSFERASE PROTEIN-RELATED"/>
    <property type="match status" value="1"/>
</dbReference>
<dbReference type="Pfam" id="PF02545">
    <property type="entry name" value="Maf"/>
    <property type="match status" value="1"/>
</dbReference>
<dbReference type="PIRSF" id="PIRSF006305">
    <property type="entry name" value="Maf"/>
    <property type="match status" value="1"/>
</dbReference>
<dbReference type="SUPFAM" id="SSF52972">
    <property type="entry name" value="ITPase-like"/>
    <property type="match status" value="1"/>
</dbReference>